<feature type="chain" id="PRO_0000427145" description="Pre-mycofactocin synthase">
    <location>
        <begin position="1"/>
        <end position="396"/>
    </location>
</feature>
<feature type="domain" description="FMN hydroxy acid dehydrogenase" evidence="2">
    <location>
        <begin position="1"/>
        <end position="383"/>
    </location>
</feature>
<feature type="active site" description="Proton acceptor" evidence="2">
    <location>
        <position position="278"/>
    </location>
</feature>
<feature type="binding site" evidence="2">
    <location>
        <position position="108"/>
    </location>
    <ligand>
        <name>FMN</name>
        <dbReference type="ChEBI" id="CHEBI:58210"/>
    </ligand>
</feature>
<feature type="binding site" evidence="2">
    <location>
        <position position="128"/>
    </location>
    <ligand>
        <name>FMN</name>
        <dbReference type="ChEBI" id="CHEBI:58210"/>
    </ligand>
</feature>
<feature type="binding site" evidence="2">
    <location>
        <position position="156"/>
    </location>
    <ligand>
        <name>FMN</name>
        <dbReference type="ChEBI" id="CHEBI:58210"/>
    </ligand>
</feature>
<feature type="binding site" evidence="2">
    <location>
        <position position="254"/>
    </location>
    <ligand>
        <name>FMN</name>
        <dbReference type="ChEBI" id="CHEBI:58210"/>
    </ligand>
</feature>
<feature type="binding site" evidence="2">
    <location>
        <begin position="309"/>
        <end position="313"/>
    </location>
    <ligand>
        <name>FMN</name>
        <dbReference type="ChEBI" id="CHEBI:58210"/>
    </ligand>
</feature>
<feature type="binding site" evidence="2">
    <location>
        <begin position="332"/>
        <end position="333"/>
    </location>
    <ligand>
        <name>FMN</name>
        <dbReference type="ChEBI" id="CHEBI:58210"/>
    </ligand>
</feature>
<keyword id="KW-0285">Flavoprotein</keyword>
<keyword id="KW-0288">FMN</keyword>
<keyword id="KW-0560">Oxidoreductase</keyword>
<keyword id="KW-1185">Reference proteome</keyword>
<proteinExistence type="inferred from homology"/>
<organism>
    <name type="scientific">Mycobacterium tuberculosis (strain CDC 1551 / Oshkosh)</name>
    <dbReference type="NCBI Taxonomy" id="83331"/>
    <lineage>
        <taxon>Bacteria</taxon>
        <taxon>Bacillati</taxon>
        <taxon>Actinomycetota</taxon>
        <taxon>Actinomycetes</taxon>
        <taxon>Mycobacteriales</taxon>
        <taxon>Mycobacteriaceae</taxon>
        <taxon>Mycobacterium</taxon>
        <taxon>Mycobacterium tuberculosis complex</taxon>
    </lineage>
</organism>
<reference key="1">
    <citation type="journal article" date="2002" name="J. Bacteriol.">
        <title>Whole-genome comparison of Mycobacterium tuberculosis clinical and laboratory strains.</title>
        <authorList>
            <person name="Fleischmann R.D."/>
            <person name="Alland D."/>
            <person name="Eisen J.A."/>
            <person name="Carpenter L."/>
            <person name="White O."/>
            <person name="Peterson J.D."/>
            <person name="DeBoy R.T."/>
            <person name="Dodson R.J."/>
            <person name="Gwinn M.L."/>
            <person name="Haft D.H."/>
            <person name="Hickey E.K."/>
            <person name="Kolonay J.F."/>
            <person name="Nelson W.C."/>
            <person name="Umayam L.A."/>
            <person name="Ermolaeva M.D."/>
            <person name="Salzberg S.L."/>
            <person name="Delcher A."/>
            <person name="Utterback T.R."/>
            <person name="Weidman J.F."/>
            <person name="Khouri H.M."/>
            <person name="Gill J."/>
            <person name="Mikula A."/>
            <person name="Bishai W."/>
            <person name="Jacobs W.R. Jr."/>
            <person name="Venter J.C."/>
            <person name="Fraser C.M."/>
        </authorList>
    </citation>
    <scope>NUCLEOTIDE SEQUENCE [LARGE SCALE GENOMIC DNA]</scope>
    <source>
        <strain>CDC 1551 / Oshkosh</strain>
    </source>
</reference>
<accession>P9WND6</accession>
<accession>L0T788</accession>
<accession>P95040</accession>
<accession>Q8VKG1</accession>
<sequence length="396" mass="42161">MAEAWFETVAIAQQRAKRRLPKSVYSSLIAASEKGITVADNVAAFSELGFAPHVIGATDKRDLSTTVMGQEVSLPVIISPTGVQAVDPGGEVAVARAAAARGTVMGLSSFASKPIEEVIAANPKTFFQVYWQGGRDALAERVERARQAGAVGLVVTTDWTFSHGRDWGSPKIPEEMNLKTILRLSPEAITRPRWLWKFAKTLRPPDLRVPNQGRRGEPGPPFFAAYGEWMATPPPTWEDIGWLRELWGGPFMLKGVMRVDDAKRAVDAGVSAISVSNHGGNNLDGTPASIRALPAVSAAVGDQVEVLLDGGIRRGSDVVKAVALGARAVMIGRAYLWGLAANGQAGVENVLDILRGGIDSALMGLGHASVHDLSPADILVPTGFIRDLGVPSRRDV</sequence>
<gene>
    <name type="primary">mftD</name>
    <name type="synonym">lldD1</name>
    <name type="ordered locus">MT0721</name>
</gene>
<dbReference type="EC" id="1.4.3.26" evidence="1"/>
<dbReference type="EMBL" id="AE000516">
    <property type="protein sequence ID" value="AAK44950.1"/>
    <property type="status" value="ALT_FRAME"/>
    <property type="molecule type" value="Genomic_DNA"/>
</dbReference>
<dbReference type="PIR" id="A70641">
    <property type="entry name" value="A70641"/>
</dbReference>
<dbReference type="SMR" id="P9WND6"/>
<dbReference type="KEGG" id="mtc:MT0721"/>
<dbReference type="HOGENOM" id="CLU_020639_0_0_11"/>
<dbReference type="Proteomes" id="UP000001020">
    <property type="component" value="Chromosome"/>
</dbReference>
<dbReference type="GO" id="GO:0010181">
    <property type="term" value="F:FMN binding"/>
    <property type="evidence" value="ECO:0007669"/>
    <property type="project" value="InterPro"/>
</dbReference>
<dbReference type="GO" id="GO:0016491">
    <property type="term" value="F:oxidoreductase activity"/>
    <property type="evidence" value="ECO:0007669"/>
    <property type="project" value="UniProtKB-KW"/>
</dbReference>
<dbReference type="GO" id="GO:0140604">
    <property type="term" value="P:mycofactocin biosynthetic process"/>
    <property type="evidence" value="ECO:0000250"/>
    <property type="project" value="UniProtKB"/>
</dbReference>
<dbReference type="CDD" id="cd02809">
    <property type="entry name" value="alpha_hydroxyacid_oxid_FMN"/>
    <property type="match status" value="1"/>
</dbReference>
<dbReference type="FunFam" id="3.20.20.70:FF:000203">
    <property type="entry name" value="Mycofactocin system heme/flavin oxidoreductase MftD"/>
    <property type="match status" value="1"/>
</dbReference>
<dbReference type="Gene3D" id="3.20.20.70">
    <property type="entry name" value="Aldolase class I"/>
    <property type="match status" value="1"/>
</dbReference>
<dbReference type="InterPro" id="IPR013785">
    <property type="entry name" value="Aldolase_TIM"/>
</dbReference>
<dbReference type="InterPro" id="IPR012133">
    <property type="entry name" value="Alpha-hydoxy_acid_DH_FMN"/>
</dbReference>
<dbReference type="InterPro" id="IPR000262">
    <property type="entry name" value="FMN-dep_DH"/>
</dbReference>
<dbReference type="InterPro" id="IPR037396">
    <property type="entry name" value="FMN_HAD"/>
</dbReference>
<dbReference type="InterPro" id="IPR023989">
    <property type="entry name" value="MftD"/>
</dbReference>
<dbReference type="NCBIfam" id="TIGR03966">
    <property type="entry name" value="actino_HemFlav"/>
    <property type="match status" value="1"/>
</dbReference>
<dbReference type="PANTHER" id="PTHR10578:SF107">
    <property type="entry name" value="2-HYDROXYACID OXIDASE 1"/>
    <property type="match status" value="1"/>
</dbReference>
<dbReference type="PANTHER" id="PTHR10578">
    <property type="entry name" value="S -2-HYDROXY-ACID OXIDASE-RELATED"/>
    <property type="match status" value="1"/>
</dbReference>
<dbReference type="Pfam" id="PF01070">
    <property type="entry name" value="FMN_dh"/>
    <property type="match status" value="1"/>
</dbReference>
<dbReference type="PIRSF" id="PIRSF000138">
    <property type="entry name" value="Al-hdrx_acd_dh"/>
    <property type="match status" value="1"/>
</dbReference>
<dbReference type="SUPFAM" id="SSF51395">
    <property type="entry name" value="FMN-linked oxidoreductases"/>
    <property type="match status" value="1"/>
</dbReference>
<dbReference type="PROSITE" id="PS51349">
    <property type="entry name" value="FMN_HYDROXY_ACID_DH_2"/>
    <property type="match status" value="1"/>
</dbReference>
<name>MFTD_MYCTO</name>
<evidence type="ECO:0000250" key="1">
    <source>
        <dbReference type="UniProtKB" id="A0PM50"/>
    </source>
</evidence>
<evidence type="ECO:0000255" key="2">
    <source>
        <dbReference type="PROSITE-ProRule" id="PRU00683"/>
    </source>
</evidence>
<evidence type="ECO:0000305" key="3"/>
<comment type="function">
    <text evidence="1">Involved in the biosynthesis of the enzyme cofactor mycofactocin (MFT). Catalyzes the oxidative deamination of AHDP (3-amino-5-[(4-hydroxyphenyl)methyl]-4,4-dimethyl-2-pyrrolidin-2-one), forming an alpha-keto amide moiety on the resulting molecule, which is called pre-mycofactocin (PMFT). This reaction occurs via a 5-[(4-hydroxyphenyl)methyl]-3-imino-4,4-dimethylpyrrolidin-2-one intermediate, which converts to PMFT. The alpha-keto amide moiety is the redox-active center for the redox activity of mycofactocin.</text>
</comment>
<comment type="catalytic activity">
    <reaction evidence="1">
        <text>3-amino-5-[(4-hydroxyphenyl)methyl]-4,4-dimethyl-2-pyrrolidin-2-one + O2 + H2O = pre-mycofactocin + H2O2 + NH4(+)</text>
        <dbReference type="Rhea" id="RHEA:65508"/>
        <dbReference type="ChEBI" id="CHEBI:15377"/>
        <dbReference type="ChEBI" id="CHEBI:15379"/>
        <dbReference type="ChEBI" id="CHEBI:16240"/>
        <dbReference type="ChEBI" id="CHEBI:28938"/>
        <dbReference type="ChEBI" id="CHEBI:150862"/>
        <dbReference type="ChEBI" id="CHEBI:150863"/>
        <dbReference type="EC" id="1.4.3.26"/>
    </reaction>
</comment>
<comment type="cofactor">
    <cofactor evidence="1">
        <name>FMN</name>
        <dbReference type="ChEBI" id="CHEBI:58210"/>
    </cofactor>
</comment>
<comment type="similarity">
    <text evidence="2">Belongs to the FMN-dependent alpha-hydroxy acid dehydrogenase family.</text>
</comment>
<comment type="sequence caution" evidence="3">
    <conflict type="frameshift">
        <sequence resource="EMBL-CDS" id="AAK44950"/>
    </conflict>
</comment>
<protein>
    <recommendedName>
        <fullName>Pre-mycofactocin synthase</fullName>
        <shortName>PMFT synthase</shortName>
        <ecNumber evidence="1">1.4.3.26</ecNumber>
    </recommendedName>
</protein>